<gene>
    <name evidence="1" type="primary">rplW</name>
    <name type="ordered locus">SAB2120c</name>
</gene>
<sequence>MEARDILKRPVITEKSSEAMAEDKYTFDVDTRVNKTQVKMAVEEIFNVKVASVNIMNYKPKKKRMGRYQGYTNKRRKAIVTLKEGSIDLFN</sequence>
<proteinExistence type="evidence at protein level"/>
<accession>Q2YYP8</accession>
<feature type="chain" id="PRO_0000272851" description="Large ribosomal subunit protein uL23">
    <location>
        <begin position="1"/>
        <end position="91"/>
    </location>
</feature>
<protein>
    <recommendedName>
        <fullName evidence="1">Large ribosomal subunit protein uL23</fullName>
    </recommendedName>
    <alternativeName>
        <fullName evidence="2">50S ribosomal protein L23</fullName>
    </alternativeName>
</protein>
<organism>
    <name type="scientific">Staphylococcus aureus (strain bovine RF122 / ET3-1)</name>
    <dbReference type="NCBI Taxonomy" id="273036"/>
    <lineage>
        <taxon>Bacteria</taxon>
        <taxon>Bacillati</taxon>
        <taxon>Bacillota</taxon>
        <taxon>Bacilli</taxon>
        <taxon>Bacillales</taxon>
        <taxon>Staphylococcaceae</taxon>
        <taxon>Staphylococcus</taxon>
    </lineage>
</organism>
<name>RL23_STAAB</name>
<dbReference type="EMBL" id="AJ938182">
    <property type="protein sequence ID" value="CAI81809.1"/>
    <property type="molecule type" value="Genomic_DNA"/>
</dbReference>
<dbReference type="RefSeq" id="WP_000388082.1">
    <property type="nucleotide sequence ID" value="NC_007622.1"/>
</dbReference>
<dbReference type="PDB" id="6FXC">
    <property type="method" value="EM"/>
    <property type="resolution" value="6.76 A"/>
    <property type="chains" value="AR/BR=2-90"/>
</dbReference>
<dbReference type="PDBsum" id="6FXC"/>
<dbReference type="EMDB" id="EMD-0243"/>
<dbReference type="EMDB" id="EMD-3637"/>
<dbReference type="SMR" id="Q2YYP8"/>
<dbReference type="KEGG" id="sab:SAB2120c"/>
<dbReference type="HOGENOM" id="CLU_037562_3_2_9"/>
<dbReference type="GO" id="GO:1990904">
    <property type="term" value="C:ribonucleoprotein complex"/>
    <property type="evidence" value="ECO:0007669"/>
    <property type="project" value="UniProtKB-KW"/>
</dbReference>
<dbReference type="GO" id="GO:0005840">
    <property type="term" value="C:ribosome"/>
    <property type="evidence" value="ECO:0007669"/>
    <property type="project" value="UniProtKB-KW"/>
</dbReference>
<dbReference type="GO" id="GO:0019843">
    <property type="term" value="F:rRNA binding"/>
    <property type="evidence" value="ECO:0007669"/>
    <property type="project" value="UniProtKB-UniRule"/>
</dbReference>
<dbReference type="GO" id="GO:0003735">
    <property type="term" value="F:structural constituent of ribosome"/>
    <property type="evidence" value="ECO:0007669"/>
    <property type="project" value="InterPro"/>
</dbReference>
<dbReference type="GO" id="GO:0006412">
    <property type="term" value="P:translation"/>
    <property type="evidence" value="ECO:0007669"/>
    <property type="project" value="UniProtKB-UniRule"/>
</dbReference>
<dbReference type="FunFam" id="3.30.70.330:FF:000001">
    <property type="entry name" value="50S ribosomal protein L23"/>
    <property type="match status" value="1"/>
</dbReference>
<dbReference type="Gene3D" id="3.30.70.330">
    <property type="match status" value="1"/>
</dbReference>
<dbReference type="HAMAP" id="MF_01369_B">
    <property type="entry name" value="Ribosomal_uL23_B"/>
    <property type="match status" value="1"/>
</dbReference>
<dbReference type="InterPro" id="IPR012677">
    <property type="entry name" value="Nucleotide-bd_a/b_plait_sf"/>
</dbReference>
<dbReference type="InterPro" id="IPR013025">
    <property type="entry name" value="Ribosomal_uL23-like"/>
</dbReference>
<dbReference type="InterPro" id="IPR012678">
    <property type="entry name" value="Ribosomal_uL23/eL15/eS24_sf"/>
</dbReference>
<dbReference type="NCBIfam" id="NF004363">
    <property type="entry name" value="PRK05738.2-4"/>
    <property type="match status" value="1"/>
</dbReference>
<dbReference type="PANTHER" id="PTHR11620">
    <property type="entry name" value="60S RIBOSOMAL PROTEIN L23A"/>
    <property type="match status" value="1"/>
</dbReference>
<dbReference type="Pfam" id="PF00276">
    <property type="entry name" value="Ribosomal_L23"/>
    <property type="match status" value="1"/>
</dbReference>
<dbReference type="SUPFAM" id="SSF54189">
    <property type="entry name" value="Ribosomal proteins S24e, L23 and L15e"/>
    <property type="match status" value="1"/>
</dbReference>
<keyword id="KW-0002">3D-structure</keyword>
<keyword id="KW-0687">Ribonucleoprotein</keyword>
<keyword id="KW-0689">Ribosomal protein</keyword>
<keyword id="KW-0694">RNA-binding</keyword>
<keyword id="KW-0699">rRNA-binding</keyword>
<reference key="1">
    <citation type="journal article" date="2007" name="PLoS ONE">
        <title>Molecular correlates of host specialization in Staphylococcus aureus.</title>
        <authorList>
            <person name="Herron-Olson L."/>
            <person name="Fitzgerald J.R."/>
            <person name="Musser J.M."/>
            <person name="Kapur V."/>
        </authorList>
    </citation>
    <scope>NUCLEOTIDE SEQUENCE [LARGE SCALE GENOMIC DNA]</scope>
    <source>
        <strain>bovine RF122 / ET3-1</strain>
    </source>
</reference>
<evidence type="ECO:0000255" key="1">
    <source>
        <dbReference type="HAMAP-Rule" id="MF_01369"/>
    </source>
</evidence>
<evidence type="ECO:0000305" key="2"/>
<comment type="function">
    <text evidence="1">One of the early assembly proteins it binds 23S rRNA. One of the proteins that surrounds the polypeptide exit tunnel on the outside of the ribosome. Forms the main docking site for trigger factor binding to the ribosome.</text>
</comment>
<comment type="subunit">
    <text evidence="1">Part of the 50S ribosomal subunit. Contacts protein L29, and trigger factor when it is bound to the ribosome.</text>
</comment>
<comment type="similarity">
    <text evidence="1">Belongs to the universal ribosomal protein uL23 family.</text>
</comment>